<evidence type="ECO:0000255" key="1">
    <source>
        <dbReference type="HAMAP-Rule" id="MF_00123"/>
    </source>
</evidence>
<reference key="1">
    <citation type="journal article" date="2003" name="Nat. Genet.">
        <title>Comparative analysis of the genome sequences of Bordetella pertussis, Bordetella parapertussis and Bordetella bronchiseptica.</title>
        <authorList>
            <person name="Parkhill J."/>
            <person name="Sebaihia M."/>
            <person name="Preston A."/>
            <person name="Murphy L.D."/>
            <person name="Thomson N.R."/>
            <person name="Harris D.E."/>
            <person name="Holden M.T.G."/>
            <person name="Churcher C.M."/>
            <person name="Bentley S.D."/>
            <person name="Mungall K.L."/>
            <person name="Cerdeno-Tarraga A.-M."/>
            <person name="Temple L."/>
            <person name="James K.D."/>
            <person name="Harris B."/>
            <person name="Quail M.A."/>
            <person name="Achtman M."/>
            <person name="Atkin R."/>
            <person name="Baker S."/>
            <person name="Basham D."/>
            <person name="Bason N."/>
            <person name="Cherevach I."/>
            <person name="Chillingworth T."/>
            <person name="Collins M."/>
            <person name="Cronin A."/>
            <person name="Davis P."/>
            <person name="Doggett J."/>
            <person name="Feltwell T."/>
            <person name="Goble A."/>
            <person name="Hamlin N."/>
            <person name="Hauser H."/>
            <person name="Holroyd S."/>
            <person name="Jagels K."/>
            <person name="Leather S."/>
            <person name="Moule S."/>
            <person name="Norberczak H."/>
            <person name="O'Neil S."/>
            <person name="Ormond D."/>
            <person name="Price C."/>
            <person name="Rabbinowitsch E."/>
            <person name="Rutter S."/>
            <person name="Sanders M."/>
            <person name="Saunders D."/>
            <person name="Seeger K."/>
            <person name="Sharp S."/>
            <person name="Simmonds M."/>
            <person name="Skelton J."/>
            <person name="Squares R."/>
            <person name="Squares S."/>
            <person name="Stevens K."/>
            <person name="Unwin L."/>
            <person name="Whitehead S."/>
            <person name="Barrell B.G."/>
            <person name="Maskell D.J."/>
        </authorList>
    </citation>
    <scope>NUCLEOTIDE SEQUENCE [LARGE SCALE GENOMIC DNA]</scope>
    <source>
        <strain>12822 / ATCC BAA-587 / NCTC 13253</strain>
    </source>
</reference>
<dbReference type="EC" id="6.1.1.19" evidence="1"/>
<dbReference type="EMBL" id="BX640436">
    <property type="protein sequence ID" value="CAE39631.1"/>
    <property type="molecule type" value="Genomic_DNA"/>
</dbReference>
<dbReference type="RefSeq" id="WP_010929524.1">
    <property type="nucleotide sequence ID" value="NC_002928.3"/>
</dbReference>
<dbReference type="SMR" id="Q7W2Q2"/>
<dbReference type="DNASU" id="1665559"/>
<dbReference type="GeneID" id="93206152"/>
<dbReference type="KEGG" id="bpa:BPP4352"/>
<dbReference type="HOGENOM" id="CLU_006406_0_1_4"/>
<dbReference type="Proteomes" id="UP000001421">
    <property type="component" value="Chromosome"/>
</dbReference>
<dbReference type="GO" id="GO:0005737">
    <property type="term" value="C:cytoplasm"/>
    <property type="evidence" value="ECO:0007669"/>
    <property type="project" value="UniProtKB-SubCell"/>
</dbReference>
<dbReference type="GO" id="GO:0004814">
    <property type="term" value="F:arginine-tRNA ligase activity"/>
    <property type="evidence" value="ECO:0007669"/>
    <property type="project" value="UniProtKB-UniRule"/>
</dbReference>
<dbReference type="GO" id="GO:0005524">
    <property type="term" value="F:ATP binding"/>
    <property type="evidence" value="ECO:0007669"/>
    <property type="project" value="UniProtKB-UniRule"/>
</dbReference>
<dbReference type="GO" id="GO:0006420">
    <property type="term" value="P:arginyl-tRNA aminoacylation"/>
    <property type="evidence" value="ECO:0007669"/>
    <property type="project" value="UniProtKB-UniRule"/>
</dbReference>
<dbReference type="CDD" id="cd07956">
    <property type="entry name" value="Anticodon_Ia_Arg"/>
    <property type="match status" value="1"/>
</dbReference>
<dbReference type="CDD" id="cd00671">
    <property type="entry name" value="ArgRS_core"/>
    <property type="match status" value="1"/>
</dbReference>
<dbReference type="FunFam" id="1.10.730.10:FF:000008">
    <property type="entry name" value="Arginine--tRNA ligase"/>
    <property type="match status" value="1"/>
</dbReference>
<dbReference type="FunFam" id="3.40.50.620:FF:000062">
    <property type="entry name" value="Arginine--tRNA ligase"/>
    <property type="match status" value="1"/>
</dbReference>
<dbReference type="Gene3D" id="3.30.1360.70">
    <property type="entry name" value="Arginyl tRNA synthetase N-terminal domain"/>
    <property type="match status" value="1"/>
</dbReference>
<dbReference type="Gene3D" id="3.40.50.620">
    <property type="entry name" value="HUPs"/>
    <property type="match status" value="1"/>
</dbReference>
<dbReference type="Gene3D" id="1.10.730.10">
    <property type="entry name" value="Isoleucyl-tRNA Synthetase, Domain 1"/>
    <property type="match status" value="1"/>
</dbReference>
<dbReference type="HAMAP" id="MF_00123">
    <property type="entry name" value="Arg_tRNA_synth"/>
    <property type="match status" value="1"/>
</dbReference>
<dbReference type="InterPro" id="IPR001412">
    <property type="entry name" value="aa-tRNA-synth_I_CS"/>
</dbReference>
<dbReference type="InterPro" id="IPR001278">
    <property type="entry name" value="Arg-tRNA-ligase"/>
</dbReference>
<dbReference type="InterPro" id="IPR005148">
    <property type="entry name" value="Arg-tRNA-synth_N"/>
</dbReference>
<dbReference type="InterPro" id="IPR036695">
    <property type="entry name" value="Arg-tRNA-synth_N_sf"/>
</dbReference>
<dbReference type="InterPro" id="IPR035684">
    <property type="entry name" value="ArgRS_core"/>
</dbReference>
<dbReference type="InterPro" id="IPR008909">
    <property type="entry name" value="DALR_anticod-bd"/>
</dbReference>
<dbReference type="InterPro" id="IPR014729">
    <property type="entry name" value="Rossmann-like_a/b/a_fold"/>
</dbReference>
<dbReference type="InterPro" id="IPR009080">
    <property type="entry name" value="tRNAsynth_Ia_anticodon-bd"/>
</dbReference>
<dbReference type="NCBIfam" id="TIGR00456">
    <property type="entry name" value="argS"/>
    <property type="match status" value="1"/>
</dbReference>
<dbReference type="PANTHER" id="PTHR11956:SF5">
    <property type="entry name" value="ARGININE--TRNA LIGASE, CYTOPLASMIC"/>
    <property type="match status" value="1"/>
</dbReference>
<dbReference type="PANTHER" id="PTHR11956">
    <property type="entry name" value="ARGINYL-TRNA SYNTHETASE"/>
    <property type="match status" value="1"/>
</dbReference>
<dbReference type="Pfam" id="PF03485">
    <property type="entry name" value="Arg_tRNA_synt_N"/>
    <property type="match status" value="1"/>
</dbReference>
<dbReference type="Pfam" id="PF05746">
    <property type="entry name" value="DALR_1"/>
    <property type="match status" value="1"/>
</dbReference>
<dbReference type="Pfam" id="PF00750">
    <property type="entry name" value="tRNA-synt_1d"/>
    <property type="match status" value="1"/>
</dbReference>
<dbReference type="PRINTS" id="PR01038">
    <property type="entry name" value="TRNASYNTHARG"/>
</dbReference>
<dbReference type="SMART" id="SM01016">
    <property type="entry name" value="Arg_tRNA_synt_N"/>
    <property type="match status" value="1"/>
</dbReference>
<dbReference type="SMART" id="SM00836">
    <property type="entry name" value="DALR_1"/>
    <property type="match status" value="1"/>
</dbReference>
<dbReference type="SUPFAM" id="SSF47323">
    <property type="entry name" value="Anticodon-binding domain of a subclass of class I aminoacyl-tRNA synthetases"/>
    <property type="match status" value="1"/>
</dbReference>
<dbReference type="SUPFAM" id="SSF55190">
    <property type="entry name" value="Arginyl-tRNA synthetase (ArgRS), N-terminal 'additional' domain"/>
    <property type="match status" value="1"/>
</dbReference>
<dbReference type="SUPFAM" id="SSF52374">
    <property type="entry name" value="Nucleotidylyl transferase"/>
    <property type="match status" value="1"/>
</dbReference>
<dbReference type="PROSITE" id="PS00178">
    <property type="entry name" value="AA_TRNA_LIGASE_I"/>
    <property type="match status" value="1"/>
</dbReference>
<keyword id="KW-0030">Aminoacyl-tRNA synthetase</keyword>
<keyword id="KW-0067">ATP-binding</keyword>
<keyword id="KW-0963">Cytoplasm</keyword>
<keyword id="KW-0436">Ligase</keyword>
<keyword id="KW-0547">Nucleotide-binding</keyword>
<keyword id="KW-0648">Protein biosynthesis</keyword>
<feature type="chain" id="PRO_0000151535" description="Arginine--tRNA ligase">
    <location>
        <begin position="1"/>
        <end position="561"/>
    </location>
</feature>
<feature type="short sequence motif" description="'HIGH' region">
    <location>
        <begin position="129"/>
        <end position="139"/>
    </location>
</feature>
<proteinExistence type="inferred from homology"/>
<organism>
    <name type="scientific">Bordetella parapertussis (strain 12822 / ATCC BAA-587 / NCTC 13253)</name>
    <dbReference type="NCBI Taxonomy" id="257311"/>
    <lineage>
        <taxon>Bacteria</taxon>
        <taxon>Pseudomonadati</taxon>
        <taxon>Pseudomonadota</taxon>
        <taxon>Betaproteobacteria</taxon>
        <taxon>Burkholderiales</taxon>
        <taxon>Alcaligenaceae</taxon>
        <taxon>Bordetella</taxon>
    </lineage>
</organism>
<accession>Q7W2Q2</accession>
<gene>
    <name evidence="1" type="primary">argS</name>
    <name type="ordered locus">BPP4352</name>
</gene>
<protein>
    <recommendedName>
        <fullName evidence="1">Arginine--tRNA ligase</fullName>
        <ecNumber evidence="1">6.1.1.19</ecNumber>
    </recommendedName>
    <alternativeName>
        <fullName evidence="1">Arginyl-tRNA synthetase</fullName>
        <shortName evidence="1">ArgRS</shortName>
    </alternativeName>
</protein>
<sequence length="561" mass="61547">MLLEQQKQLISLIQAAVAQCLPEAQAQVQLERPKVAAHGDIATNVAMQLAKPARRNPRELAQGIVDALMAQPQARELIQDAEIAGPGFINFRLTPAARQAVVQAVASQADAYGRAPRNGEKVLVEFVSANPTGPLHVGHARQAALGDAICRLYDASGWDVTREFYYNDAGNQIDNLAISVQARGRGIAPDAPDYPTDGYKGDYIVEIARDFAARKSVQASDGQPVTATGDLDSLDDIRAFAVAYLRREQDLDLQAFGLAFDNYFLESSLYASGRVQETVDTLVAKGHTYEEGGALWLRTTELGTGDDKDRVMRKSEGGYTYFVPDVAYHKVKWERGFHHAVNIQGSDHHGTVARVRAGLQGLEAGIPKDFPAYVLHKMVKVMRGGEEVKISKRAGSYVTMRDLIDWVGRDAVRYFLIQRRADTEFVFDIDLALSKSDENPVYYIQYAHARICTMIGNSGASAAEIAQADTALLTAPSEYALLQRLAEFPQVVALAAQELAPHHVAFWLRDCASDFHAWYNAERVLVDEPALKLARLRLAATTRQVLANGLALLGVSAPDRM</sequence>
<name>SYR_BORPA</name>
<comment type="catalytic activity">
    <reaction evidence="1">
        <text>tRNA(Arg) + L-arginine + ATP = L-arginyl-tRNA(Arg) + AMP + diphosphate</text>
        <dbReference type="Rhea" id="RHEA:20301"/>
        <dbReference type="Rhea" id="RHEA-COMP:9658"/>
        <dbReference type="Rhea" id="RHEA-COMP:9673"/>
        <dbReference type="ChEBI" id="CHEBI:30616"/>
        <dbReference type="ChEBI" id="CHEBI:32682"/>
        <dbReference type="ChEBI" id="CHEBI:33019"/>
        <dbReference type="ChEBI" id="CHEBI:78442"/>
        <dbReference type="ChEBI" id="CHEBI:78513"/>
        <dbReference type="ChEBI" id="CHEBI:456215"/>
        <dbReference type="EC" id="6.1.1.19"/>
    </reaction>
</comment>
<comment type="subunit">
    <text evidence="1">Monomer.</text>
</comment>
<comment type="subcellular location">
    <subcellularLocation>
        <location evidence="1">Cytoplasm</location>
    </subcellularLocation>
</comment>
<comment type="similarity">
    <text evidence="1">Belongs to the class-I aminoacyl-tRNA synthetase family.</text>
</comment>